<reference key="1">
    <citation type="journal article" date="1999" name="J. Virol.">
        <title>Comparison of the complete DNA sequences of human herpesvirus 6 variants A and B.</title>
        <authorList>
            <person name="Isegawa Y."/>
            <person name="Mukai T."/>
            <person name="Nakano K."/>
            <person name="Kagawa M."/>
            <person name="Chen J."/>
            <person name="Mori Y."/>
            <person name="Sunagawa T."/>
            <person name="Kawanishi K."/>
            <person name="Sashihara J."/>
            <person name="Hata A."/>
            <person name="Zou P."/>
            <person name="Kosuge H."/>
            <person name="Yamanishi K."/>
        </authorList>
    </citation>
    <scope>NUCLEOTIDE SEQUENCE [LARGE SCALE GENOMIC DNA]</scope>
    <source>
        <strain>HST</strain>
    </source>
</reference>
<gene>
    <name type="primary">U94</name>
</gene>
<feature type="chain" id="PRO_0000461152" description="Protein U94">
    <location>
        <begin position="1"/>
        <end position="490"/>
    </location>
</feature>
<feature type="domain" description="PV NS1-Nuc" evidence="2">
    <location>
        <begin position="1"/>
        <end position="210"/>
    </location>
</feature>
<feature type="domain" description="SF3 helicase">
    <location>
        <begin position="312"/>
        <end position="463"/>
    </location>
</feature>
<feature type="binding site" evidence="1">
    <location>
        <begin position="338"/>
        <end position="345"/>
    </location>
    <ligand>
        <name>ATP</name>
        <dbReference type="ChEBI" id="CHEBI:30616"/>
    </ligand>
</feature>
<comment type="subcellular location">
    <subcellularLocation>
        <location evidence="2">Host nucleus</location>
    </subcellularLocation>
</comment>
<proteinExistence type="inferred from homology"/>
<keyword id="KW-0067">ATP-binding</keyword>
<keyword id="KW-0235">DNA replication</keyword>
<keyword id="KW-0238">DNA-binding</keyword>
<keyword id="KW-1048">Host nucleus</keyword>
<keyword id="KW-0547">Nucleotide-binding</keyword>
<protein>
    <recommendedName>
        <fullName>Protein U94</fullName>
    </recommendedName>
</protein>
<organism>
    <name type="scientific">Human herpesvirus 6B</name>
    <name type="common">HHV-6 variant B</name>
    <name type="synonym">Human B lymphotropic virus</name>
    <dbReference type="NCBI Taxonomy" id="32604"/>
    <lineage>
        <taxon>Viruses</taxon>
        <taxon>Duplodnaviria</taxon>
        <taxon>Heunggongvirae</taxon>
        <taxon>Peploviricota</taxon>
        <taxon>Herviviricetes</taxon>
        <taxon>Herpesvirales</taxon>
        <taxon>Orthoherpesviridae</taxon>
        <taxon>Betaherpesvirinae</taxon>
        <taxon>Roseolovirus</taxon>
        <taxon>Roseolovirus humanbeta6b</taxon>
    </lineage>
</organism>
<evidence type="ECO:0000255" key="1"/>
<evidence type="ECO:0000255" key="2">
    <source>
        <dbReference type="PROSITE-ProRule" id="PRU01366"/>
    </source>
</evidence>
<dbReference type="EMBL" id="AB021506">
    <property type="protein sequence ID" value="BAA78311.1"/>
    <property type="molecule type" value="Genomic_DNA"/>
</dbReference>
<dbReference type="PIR" id="T44050">
    <property type="entry name" value="T44050"/>
</dbReference>
<dbReference type="RefSeq" id="NP_050269.1">
    <property type="nucleotide sequence ID" value="NC_000898.1"/>
</dbReference>
<dbReference type="SMR" id="P0DTO4"/>
<dbReference type="GeneID" id="1497090"/>
<dbReference type="KEGG" id="vg:1497090"/>
<dbReference type="Proteomes" id="UP000142685">
    <property type="component" value="Segment"/>
</dbReference>
<dbReference type="GO" id="GO:0042025">
    <property type="term" value="C:host cell nucleus"/>
    <property type="evidence" value="ECO:0007669"/>
    <property type="project" value="UniProtKB-SubCell"/>
</dbReference>
<dbReference type="GO" id="GO:0005524">
    <property type="term" value="F:ATP binding"/>
    <property type="evidence" value="ECO:0007669"/>
    <property type="project" value="UniProtKB-KW"/>
</dbReference>
<dbReference type="GO" id="GO:0003677">
    <property type="term" value="F:DNA binding"/>
    <property type="evidence" value="ECO:0007669"/>
    <property type="project" value="UniProtKB-KW"/>
</dbReference>
<dbReference type="GO" id="GO:0006260">
    <property type="term" value="P:DNA replication"/>
    <property type="evidence" value="ECO:0007669"/>
    <property type="project" value="UniProtKB-KW"/>
</dbReference>
<dbReference type="GO" id="GO:0019079">
    <property type="term" value="P:viral genome replication"/>
    <property type="evidence" value="ECO:0007669"/>
    <property type="project" value="InterPro"/>
</dbReference>
<dbReference type="Gene3D" id="3.40.1310.20">
    <property type="match status" value="1"/>
</dbReference>
<dbReference type="Gene3D" id="3.40.50.300">
    <property type="entry name" value="P-loop containing nucleotide triphosphate hydrolases"/>
    <property type="match status" value="1"/>
</dbReference>
<dbReference type="InterPro" id="IPR014835">
    <property type="entry name" value="NS1-Nuc"/>
</dbReference>
<dbReference type="InterPro" id="IPR027417">
    <property type="entry name" value="P-loop_NTPase"/>
</dbReference>
<dbReference type="InterPro" id="IPR001257">
    <property type="entry name" value="Parvovirus_NS1_helicase"/>
</dbReference>
<dbReference type="InterPro" id="IPR049901">
    <property type="entry name" value="PV_NS1-NUC"/>
</dbReference>
<dbReference type="Pfam" id="PF01057">
    <property type="entry name" value="Parvo_NS1"/>
    <property type="match status" value="1"/>
</dbReference>
<dbReference type="Pfam" id="PF08724">
    <property type="entry name" value="Rep_N"/>
    <property type="match status" value="1"/>
</dbReference>
<dbReference type="SUPFAM" id="SSF55464">
    <property type="entry name" value="Origin of replication-binding domain, RBD-like"/>
    <property type="match status" value="1"/>
</dbReference>
<dbReference type="SUPFAM" id="SSF52540">
    <property type="entry name" value="P-loop containing nucleoside triphosphate hydrolases"/>
    <property type="match status" value="1"/>
</dbReference>
<dbReference type="PROSITE" id="PS52022">
    <property type="entry name" value="PV_NS1_NUC"/>
    <property type="match status" value="1"/>
</dbReference>
<name>VU94_HHV6H</name>
<accession>P0DTO4</accession>
<accession>Q77PU5</accession>
<accession>Q9WSZ6</accession>
<sequence length="490" mass="56031">MFSIINPSDDFWTKDKYIMLTIKGPVEWEAEIPGISTDFFCKFSNVPVPHFRDMHSPGAPDIKWITACTKMIDVILNYWNNKTAVPTPAKWYAQAENKAGRPSLTLLIALDGIPTATIGKHTTEIRGVLIKDFFDGNAPKIDDWCTYAKTKKNGGGTQVFSLSYIPFALLQIIRPQFQWAWTNINELGDVCDEIHRKHIISHFNKKPNVKLMLFPKDGTNRISLKSKFLGTIEWLSDLGIVTEDAWIRRDVRSYMQLLTLTHGDVLIHRALSISKKRIRATRKAIDFIAHIDTDFEIYENPVYQLFCLQSFDPILAGTILYQWLSHRRGKKNTVSFIGPPGCGKSMLTGAILENIPLHGILHGSLNTKNLRAYGQVLVLWWKDISINFENFNIIKSLLGGQKIIFPINENDHVQIGPCPIIATSCVDIRSMVHSNIHKINLSQRVYNFTFDKVIPRNFPVIQKDDINQFLFWARNRSINCFIDYTVPKIL</sequence>
<organismHost>
    <name type="scientific">Homo sapiens</name>
    <name type="common">Human</name>
    <dbReference type="NCBI Taxonomy" id="9606"/>
</organismHost>